<reference evidence="6" key="1">
    <citation type="journal article" date="2004" name="Genome Res.">
        <title>The status, quality, and expansion of the NIH full-length cDNA project: the Mammalian Gene Collection (MGC).</title>
        <authorList>
            <consortium name="The MGC Project Team"/>
        </authorList>
    </citation>
    <scope>NUCLEOTIDE SEQUENCE [LARGE SCALE MRNA]</scope>
    <source>
        <tissue evidence="6">Testis</tissue>
    </source>
</reference>
<organism>
    <name type="scientific">Rattus norvegicus</name>
    <name type="common">Rat</name>
    <dbReference type="NCBI Taxonomy" id="10116"/>
    <lineage>
        <taxon>Eukaryota</taxon>
        <taxon>Metazoa</taxon>
        <taxon>Chordata</taxon>
        <taxon>Craniata</taxon>
        <taxon>Vertebrata</taxon>
        <taxon>Euteleostomi</taxon>
        <taxon>Mammalia</taxon>
        <taxon>Eutheria</taxon>
        <taxon>Euarchontoglires</taxon>
        <taxon>Glires</taxon>
        <taxon>Rodentia</taxon>
        <taxon>Myomorpha</taxon>
        <taxon>Muroidea</taxon>
        <taxon>Muridae</taxon>
        <taxon>Murinae</taxon>
        <taxon>Rattus</taxon>
    </lineage>
</organism>
<name>EID3_RAT</name>
<evidence type="ECO:0000250" key="1"/>
<evidence type="ECO:0000250" key="2">
    <source>
        <dbReference type="UniProtKB" id="Q8N140"/>
    </source>
</evidence>
<evidence type="ECO:0000255" key="3"/>
<evidence type="ECO:0000256" key="4">
    <source>
        <dbReference type="SAM" id="MobiDB-lite"/>
    </source>
</evidence>
<evidence type="ECO:0000305" key="5"/>
<evidence type="ECO:0000312" key="6">
    <source>
        <dbReference type="EMBL" id="AAH97404.1"/>
    </source>
</evidence>
<gene>
    <name evidence="6" type="primary">Eid3</name>
</gene>
<proteinExistence type="evidence at transcript level"/>
<comment type="function">
    <text evidence="1">Tissue-specific component of the SMC5-SMC6 complex, a complex involved in repair of DNA double-strand breaks by homologous recombination. The complex may promote sister chromatid homologous recombination by recruiting the SMC1-SMC3 cohesin complex to double-strand breaks. The complex is required for telomere maintenance via recombination and mediates sumoylation of shelterin complex (telosome) components (By similarity).</text>
</comment>
<comment type="function">
    <text evidence="1">Acts as a repressor of nuclear receptor-dependent transcription possibly by interfering with CREBBP-dependent coactivation. May function as a coinhibitor of other CREBBP/EP300-dependent transcription factors (By similarity).</text>
</comment>
<comment type="subunit">
    <text evidence="1">Component of the SMC5-SMC6 complex which consists at least of SMC5, SMC6, NSMCE2, NSMCE1, NSMCE4A or EID3 and NSMCE3. NSMCE1, NSMCE4A or EID3 and NSMCE3 probably form a subcomplex that bridges the head domains of the SMC5:SMC6 heterodimer. Homodimer, and heterodimer with EID2. Interacts with the C-terminal region of CREBBP (By similarity).</text>
</comment>
<comment type="subcellular location">
    <subcellularLocation>
        <location evidence="2">Nucleus</location>
    </subcellularLocation>
    <subcellularLocation>
        <location evidence="2">Cytoplasm</location>
    </subcellularLocation>
    <subcellularLocation>
        <location evidence="1">Chromosome</location>
        <location evidence="1">Telomere</location>
    </subcellularLocation>
    <text evidence="2">May shuttle between nucleus and cytoplasm.</text>
</comment>
<comment type="similarity">
    <text evidence="3">Belongs to the NSE4 family.</text>
</comment>
<comment type="sequence caution" evidence="5">
    <conflict type="erroneous initiation">
        <sequence resource="EMBL-CDS" id="AAH97404"/>
    </conflict>
</comment>
<keyword id="KW-0158">Chromosome</keyword>
<keyword id="KW-0963">Cytoplasm</keyword>
<keyword id="KW-0227">DNA damage</keyword>
<keyword id="KW-0233">DNA recombination</keyword>
<keyword id="KW-0234">DNA repair</keyword>
<keyword id="KW-0539">Nucleus</keyword>
<keyword id="KW-1185">Reference proteome</keyword>
<keyword id="KW-0678">Repressor</keyword>
<keyword id="KW-0779">Telomere</keyword>
<keyword id="KW-0804">Transcription</keyword>
<keyword id="KW-0805">Transcription regulation</keyword>
<protein>
    <recommendedName>
        <fullName>EP300-interacting inhibitor of differentiation 3</fullName>
        <shortName>EID-3</shortName>
    </recommendedName>
    <alternativeName>
        <fullName>E1A-like inhibitor of differentiation 3</fullName>
    </alternativeName>
    <alternativeName>
        <fullName>EID-1-like inhibitor of differentiation 3</fullName>
    </alternativeName>
    <alternativeName>
        <fullName>Non-structural maintenance of chromosomes element 4 homolog B</fullName>
        <shortName>NS4EB</shortName>
        <shortName>Non-SMC element 4 homolog B</shortName>
    </alternativeName>
</protein>
<accession>Q4V8G2</accession>
<dbReference type="EMBL" id="BC097404">
    <property type="protein sequence ID" value="AAH97404.1"/>
    <property type="status" value="ALT_INIT"/>
    <property type="molecule type" value="mRNA"/>
</dbReference>
<dbReference type="RefSeq" id="NP_001037769.2">
    <property type="nucleotide sequence ID" value="NM_001044304.1"/>
</dbReference>
<dbReference type="FunCoup" id="Q4V8G2">
    <property type="interactions" value="4"/>
</dbReference>
<dbReference type="PhosphoSitePlus" id="Q4V8G2"/>
<dbReference type="GeneID" id="691688"/>
<dbReference type="KEGG" id="rno:691688"/>
<dbReference type="UCSC" id="RGD:1597206">
    <property type="organism name" value="rat"/>
</dbReference>
<dbReference type="AGR" id="RGD:1597206"/>
<dbReference type="CTD" id="493861"/>
<dbReference type="RGD" id="1597206">
    <property type="gene designation" value="Eid3"/>
</dbReference>
<dbReference type="InParanoid" id="Q4V8G2"/>
<dbReference type="OrthoDB" id="85322at9989"/>
<dbReference type="PhylomeDB" id="Q4V8G2"/>
<dbReference type="PRO" id="PR:Q4V8G2"/>
<dbReference type="Proteomes" id="UP000002494">
    <property type="component" value="Unplaced"/>
</dbReference>
<dbReference type="GO" id="GO:0000781">
    <property type="term" value="C:chromosome, telomeric region"/>
    <property type="evidence" value="ECO:0007669"/>
    <property type="project" value="UniProtKB-SubCell"/>
</dbReference>
<dbReference type="GO" id="GO:0005737">
    <property type="term" value="C:cytoplasm"/>
    <property type="evidence" value="ECO:0007669"/>
    <property type="project" value="UniProtKB-SubCell"/>
</dbReference>
<dbReference type="GO" id="GO:0005634">
    <property type="term" value="C:nucleus"/>
    <property type="evidence" value="ECO:0000318"/>
    <property type="project" value="GO_Central"/>
</dbReference>
<dbReference type="GO" id="GO:0030915">
    <property type="term" value="C:Smc5-Smc6 complex"/>
    <property type="evidence" value="ECO:0000250"/>
    <property type="project" value="UniProtKB"/>
</dbReference>
<dbReference type="GO" id="GO:0006310">
    <property type="term" value="P:DNA recombination"/>
    <property type="evidence" value="ECO:0007669"/>
    <property type="project" value="UniProtKB-KW"/>
</dbReference>
<dbReference type="GO" id="GO:0006281">
    <property type="term" value="P:DNA repair"/>
    <property type="evidence" value="ECO:0000318"/>
    <property type="project" value="GO_Central"/>
</dbReference>
<dbReference type="InterPro" id="IPR027786">
    <property type="entry name" value="Nse4/EID"/>
</dbReference>
<dbReference type="InterPro" id="IPR014854">
    <property type="entry name" value="Nse4_C"/>
</dbReference>
<dbReference type="InterPro" id="IPR029225">
    <property type="entry name" value="Nse4_Nse3-bd"/>
</dbReference>
<dbReference type="PANTHER" id="PTHR16140:SF1">
    <property type="entry name" value="EP300-INTERACTING INHIBITOR OF DIFFERENTIATION 3"/>
    <property type="match status" value="1"/>
</dbReference>
<dbReference type="PANTHER" id="PTHR16140">
    <property type="entry name" value="NON-STRUCTURAL MAINTENANCE OF CHROMOSOMES ELEMENT 4"/>
    <property type="match status" value="1"/>
</dbReference>
<dbReference type="Pfam" id="PF15412">
    <property type="entry name" value="Nse4-Nse3_bdg"/>
    <property type="match status" value="1"/>
</dbReference>
<dbReference type="Pfam" id="PF08743">
    <property type="entry name" value="Nse4_C"/>
    <property type="match status" value="1"/>
</dbReference>
<feature type="chain" id="PRO_0000315908" description="EP300-interacting inhibitor of differentiation 3">
    <location>
        <begin position="1"/>
        <end position="387"/>
    </location>
</feature>
<feature type="region of interest" description="Disordered" evidence="4">
    <location>
        <begin position="1"/>
        <end position="77"/>
    </location>
</feature>
<feature type="compositionally biased region" description="Basic and acidic residues" evidence="4">
    <location>
        <begin position="1"/>
        <end position="19"/>
    </location>
</feature>
<feature type="compositionally biased region" description="Acidic residues" evidence="4">
    <location>
        <begin position="32"/>
        <end position="72"/>
    </location>
</feature>
<sequence length="387" mass="44785">MSEEKCSLTGGEEKGEELARSLAWQHLVKQAEEDDDDDEEALKKEEEEEEEEEEEDEEEEEEGPDSSSDDLSPEAPCMHPDLLELAVDREKCRSIRRQYRQLIYTVQQNREDIVNTASDSLTEALEEANVLFDGVSRTREAALDAQFLVLASDLGKEKAKQLNSDMSFFNHVAFCELLLVFVGLNWMEEECEELSECDESIALSFWNMLHKEATAWMLQAETFHFIFGSFKAERSARKPRQEHHKRACKMEGNGDMPTKLRKLDVHANQETTEKEVERILGLLQTYFQKYPDTPVSYFEFVIDPNSFSRTVENIFYVSFIIRDGFARIRLDQDRLPILEPTNVNQVDEENDSCSYCRKQGVISLSLQDWKNIVSTFEISEAMIKNSY</sequence>